<evidence type="ECO:0000255" key="1">
    <source>
        <dbReference type="HAMAP-Rule" id="MF_00262"/>
    </source>
</evidence>
<name>MINE_BURTA</name>
<feature type="chain" id="PRO_0000298094" description="Cell division topological specificity factor">
    <location>
        <begin position="1"/>
        <end position="84"/>
    </location>
</feature>
<sequence>MSILSFLLGEKKKSAAVAKERLQLIIAHERVGGRPPADYLPALQKELVAVISKYVKISNDDIRVSLERQDDLEVLEVKIEIPQA</sequence>
<dbReference type="EMBL" id="CP000086">
    <property type="protein sequence ID" value="ABC37317.1"/>
    <property type="molecule type" value="Genomic_DNA"/>
</dbReference>
<dbReference type="RefSeq" id="WP_004186076.1">
    <property type="nucleotide sequence ID" value="NZ_CP008785.1"/>
</dbReference>
<dbReference type="SMR" id="Q2SY86"/>
<dbReference type="GeneID" id="93061170"/>
<dbReference type="KEGG" id="bte:BTH_I1571"/>
<dbReference type="HOGENOM" id="CLU_137929_2_1_4"/>
<dbReference type="Proteomes" id="UP000001930">
    <property type="component" value="Chromosome I"/>
</dbReference>
<dbReference type="GO" id="GO:0051301">
    <property type="term" value="P:cell division"/>
    <property type="evidence" value="ECO:0007669"/>
    <property type="project" value="UniProtKB-KW"/>
</dbReference>
<dbReference type="GO" id="GO:0032955">
    <property type="term" value="P:regulation of division septum assembly"/>
    <property type="evidence" value="ECO:0007669"/>
    <property type="project" value="InterPro"/>
</dbReference>
<dbReference type="FunFam" id="3.30.1070.10:FF:000001">
    <property type="entry name" value="Cell division topological specificity factor"/>
    <property type="match status" value="1"/>
</dbReference>
<dbReference type="Gene3D" id="3.30.1070.10">
    <property type="entry name" value="Cell division topological specificity factor MinE"/>
    <property type="match status" value="1"/>
</dbReference>
<dbReference type="HAMAP" id="MF_00262">
    <property type="entry name" value="MinE"/>
    <property type="match status" value="1"/>
</dbReference>
<dbReference type="InterPro" id="IPR005527">
    <property type="entry name" value="MinE"/>
</dbReference>
<dbReference type="InterPro" id="IPR036707">
    <property type="entry name" value="MinE_sf"/>
</dbReference>
<dbReference type="NCBIfam" id="TIGR01215">
    <property type="entry name" value="minE"/>
    <property type="match status" value="1"/>
</dbReference>
<dbReference type="NCBIfam" id="NF001422">
    <property type="entry name" value="PRK00296.1"/>
    <property type="match status" value="1"/>
</dbReference>
<dbReference type="NCBIfam" id="NF010595">
    <property type="entry name" value="PRK13989.1"/>
    <property type="match status" value="1"/>
</dbReference>
<dbReference type="Pfam" id="PF03776">
    <property type="entry name" value="MinE"/>
    <property type="match status" value="1"/>
</dbReference>
<dbReference type="SUPFAM" id="SSF55229">
    <property type="entry name" value="Cell division protein MinE topological specificity domain"/>
    <property type="match status" value="1"/>
</dbReference>
<proteinExistence type="inferred from homology"/>
<protein>
    <recommendedName>
        <fullName evidence="1">Cell division topological specificity factor</fullName>
    </recommendedName>
</protein>
<gene>
    <name evidence="1" type="primary">minE</name>
    <name type="ordered locus">BTH_I1571</name>
</gene>
<organism>
    <name type="scientific">Burkholderia thailandensis (strain ATCC 700388 / DSM 13276 / CCUG 48851 / CIP 106301 / E264)</name>
    <dbReference type="NCBI Taxonomy" id="271848"/>
    <lineage>
        <taxon>Bacteria</taxon>
        <taxon>Pseudomonadati</taxon>
        <taxon>Pseudomonadota</taxon>
        <taxon>Betaproteobacteria</taxon>
        <taxon>Burkholderiales</taxon>
        <taxon>Burkholderiaceae</taxon>
        <taxon>Burkholderia</taxon>
        <taxon>pseudomallei group</taxon>
    </lineage>
</organism>
<keyword id="KW-0131">Cell cycle</keyword>
<keyword id="KW-0132">Cell division</keyword>
<accession>Q2SY86</accession>
<reference key="1">
    <citation type="journal article" date="2005" name="BMC Genomics">
        <title>Bacterial genome adaptation to niches: divergence of the potential virulence genes in three Burkholderia species of different survival strategies.</title>
        <authorList>
            <person name="Kim H.S."/>
            <person name="Schell M.A."/>
            <person name="Yu Y."/>
            <person name="Ulrich R.L."/>
            <person name="Sarria S.H."/>
            <person name="Nierman W.C."/>
            <person name="DeShazer D."/>
        </authorList>
    </citation>
    <scope>NUCLEOTIDE SEQUENCE [LARGE SCALE GENOMIC DNA]</scope>
    <source>
        <strain>ATCC 700388 / DSM 13276 / CCUG 48851 / CIP 106301 / E264</strain>
    </source>
</reference>
<comment type="function">
    <text evidence="1">Prevents the cell division inhibition by proteins MinC and MinD at internal division sites while permitting inhibition at polar sites. This ensures cell division at the proper site by restricting the formation of a division septum at the midpoint of the long axis of the cell.</text>
</comment>
<comment type="similarity">
    <text evidence="1">Belongs to the MinE family.</text>
</comment>